<reference key="1">
    <citation type="journal article" date="2001" name="Proc. Natl. Acad. Sci. U.S.A.">
        <title>Complete genome sequence of Caulobacter crescentus.</title>
        <authorList>
            <person name="Nierman W.C."/>
            <person name="Feldblyum T.V."/>
            <person name="Laub M.T."/>
            <person name="Paulsen I.T."/>
            <person name="Nelson K.E."/>
            <person name="Eisen J.A."/>
            <person name="Heidelberg J.F."/>
            <person name="Alley M.R.K."/>
            <person name="Ohta N."/>
            <person name="Maddock J.R."/>
            <person name="Potocka I."/>
            <person name="Nelson W.C."/>
            <person name="Newton A."/>
            <person name="Stephens C."/>
            <person name="Phadke N.D."/>
            <person name="Ely B."/>
            <person name="DeBoy R.T."/>
            <person name="Dodson R.J."/>
            <person name="Durkin A.S."/>
            <person name="Gwinn M.L."/>
            <person name="Haft D.H."/>
            <person name="Kolonay J.F."/>
            <person name="Smit J."/>
            <person name="Craven M.B."/>
            <person name="Khouri H.M."/>
            <person name="Shetty J."/>
            <person name="Berry K.J."/>
            <person name="Utterback T.R."/>
            <person name="Tran K."/>
            <person name="Wolf A.M."/>
            <person name="Vamathevan J.J."/>
            <person name="Ermolaeva M.D."/>
            <person name="White O."/>
            <person name="Salzberg S.L."/>
            <person name="Venter J.C."/>
            <person name="Shapiro L."/>
            <person name="Fraser C.M."/>
        </authorList>
    </citation>
    <scope>NUCLEOTIDE SEQUENCE [LARGE SCALE GENOMIC DNA]</scope>
    <source>
        <strain>ATCC 19089 / CIP 103742 / CB 15</strain>
    </source>
</reference>
<feature type="chain" id="PRO_0000190918" description="Tetraacyldisaccharide 4'-kinase">
    <location>
        <begin position="1"/>
        <end position="335"/>
    </location>
</feature>
<feature type="binding site" evidence="1">
    <location>
        <begin position="58"/>
        <end position="65"/>
    </location>
    <ligand>
        <name>ATP</name>
        <dbReference type="ChEBI" id="CHEBI:30616"/>
    </ligand>
</feature>
<dbReference type="EC" id="2.7.1.130" evidence="1"/>
<dbReference type="EMBL" id="AE005673">
    <property type="protein sequence ID" value="AAK22288.1"/>
    <property type="molecule type" value="Genomic_DNA"/>
</dbReference>
<dbReference type="PIR" id="D87286">
    <property type="entry name" value="D87286"/>
</dbReference>
<dbReference type="RefSeq" id="NP_419120.1">
    <property type="nucleotide sequence ID" value="NC_002696.2"/>
</dbReference>
<dbReference type="RefSeq" id="WP_010918190.1">
    <property type="nucleotide sequence ID" value="NC_002696.2"/>
</dbReference>
<dbReference type="SMR" id="P58184"/>
<dbReference type="STRING" id="190650.CC_0301"/>
<dbReference type="EnsemblBacteria" id="AAK22288">
    <property type="protein sequence ID" value="AAK22288"/>
    <property type="gene ID" value="CC_0301"/>
</dbReference>
<dbReference type="KEGG" id="ccr:CC_0301"/>
<dbReference type="PATRIC" id="fig|190650.5.peg.299"/>
<dbReference type="eggNOG" id="COG1663">
    <property type="taxonomic scope" value="Bacteria"/>
</dbReference>
<dbReference type="HOGENOM" id="CLU_038816_0_0_5"/>
<dbReference type="BioCyc" id="CAULO:CC0301-MONOMER"/>
<dbReference type="UniPathway" id="UPA00359">
    <property type="reaction ID" value="UER00482"/>
</dbReference>
<dbReference type="Proteomes" id="UP000001816">
    <property type="component" value="Chromosome"/>
</dbReference>
<dbReference type="GO" id="GO:0005886">
    <property type="term" value="C:plasma membrane"/>
    <property type="evidence" value="ECO:0007669"/>
    <property type="project" value="TreeGrafter"/>
</dbReference>
<dbReference type="GO" id="GO:0005524">
    <property type="term" value="F:ATP binding"/>
    <property type="evidence" value="ECO:0007669"/>
    <property type="project" value="UniProtKB-UniRule"/>
</dbReference>
<dbReference type="GO" id="GO:0009029">
    <property type="term" value="F:tetraacyldisaccharide 4'-kinase activity"/>
    <property type="evidence" value="ECO:0007669"/>
    <property type="project" value="UniProtKB-UniRule"/>
</dbReference>
<dbReference type="GO" id="GO:0009245">
    <property type="term" value="P:lipid A biosynthetic process"/>
    <property type="evidence" value="ECO:0007669"/>
    <property type="project" value="UniProtKB-UniRule"/>
</dbReference>
<dbReference type="GO" id="GO:0009244">
    <property type="term" value="P:lipopolysaccharide core region biosynthetic process"/>
    <property type="evidence" value="ECO:0007669"/>
    <property type="project" value="TreeGrafter"/>
</dbReference>
<dbReference type="HAMAP" id="MF_00409">
    <property type="entry name" value="LpxK"/>
    <property type="match status" value="1"/>
</dbReference>
<dbReference type="InterPro" id="IPR003758">
    <property type="entry name" value="LpxK"/>
</dbReference>
<dbReference type="InterPro" id="IPR027417">
    <property type="entry name" value="P-loop_NTPase"/>
</dbReference>
<dbReference type="NCBIfam" id="TIGR00682">
    <property type="entry name" value="lpxK"/>
    <property type="match status" value="1"/>
</dbReference>
<dbReference type="PANTHER" id="PTHR42724">
    <property type="entry name" value="TETRAACYLDISACCHARIDE 4'-KINASE"/>
    <property type="match status" value="1"/>
</dbReference>
<dbReference type="PANTHER" id="PTHR42724:SF1">
    <property type="entry name" value="TETRAACYLDISACCHARIDE 4'-KINASE, MITOCHONDRIAL-RELATED"/>
    <property type="match status" value="1"/>
</dbReference>
<dbReference type="Pfam" id="PF02606">
    <property type="entry name" value="LpxK"/>
    <property type="match status" value="1"/>
</dbReference>
<dbReference type="SUPFAM" id="SSF52540">
    <property type="entry name" value="P-loop containing nucleoside triphosphate hydrolases"/>
    <property type="match status" value="1"/>
</dbReference>
<gene>
    <name evidence="1" type="primary">lpxK</name>
    <name type="ordered locus">CC_0301</name>
</gene>
<accession>P58184</accession>
<sequence length="335" mass="35775">MKLGTPRWWYVKSGAPAPVTRALLTPLSWLWADTTRRRIARATPAIVGAPVICVGNVTMGGAGKTPIVRELLLTLTQRGVAAHGLSRGYGGKLKGPVRVDTIRHTAADVGDEPLMLAQDFPMWIAADRVAGAKAAVRAGASAIVMDDGHQNPSVKKALSLVVVDGETRGGEWPFGDGRVFPAGPMREPLKVGLSRADAVIVLLPVDVEQPDFDLLVAFGDMPVLVARLEAAAPVPKGPQVGFAGIAKPWKVEKALTAAGCQLVDFAPFPDHGAYSESTLKMLADRAEVYEAGLVTTEKDWVRLPPAWRERVTPWPVRARFEDPAALEALLKGIGL</sequence>
<comment type="function">
    <text evidence="1">Transfers the gamma-phosphate of ATP to the 4'-position of a tetraacyldisaccharide 1-phosphate intermediate (termed DS-1-P) to form tetraacyldisaccharide 1,4'-bis-phosphate (lipid IVA).</text>
</comment>
<comment type="catalytic activity">
    <reaction evidence="1">
        <text>a lipid A disaccharide + ATP = a lipid IVA + ADP + H(+)</text>
        <dbReference type="Rhea" id="RHEA:67840"/>
        <dbReference type="ChEBI" id="CHEBI:15378"/>
        <dbReference type="ChEBI" id="CHEBI:30616"/>
        <dbReference type="ChEBI" id="CHEBI:176343"/>
        <dbReference type="ChEBI" id="CHEBI:176425"/>
        <dbReference type="ChEBI" id="CHEBI:456216"/>
        <dbReference type="EC" id="2.7.1.130"/>
    </reaction>
</comment>
<comment type="pathway">
    <text evidence="1">Glycolipid biosynthesis; lipid IV(A) biosynthesis; lipid IV(A) from (3R)-3-hydroxytetradecanoyl-[acyl-carrier-protein] and UDP-N-acetyl-alpha-D-glucosamine: step 6/6.</text>
</comment>
<comment type="similarity">
    <text evidence="1">Belongs to the LpxK family.</text>
</comment>
<keyword id="KW-0067">ATP-binding</keyword>
<keyword id="KW-0418">Kinase</keyword>
<keyword id="KW-0441">Lipid A biosynthesis</keyword>
<keyword id="KW-0444">Lipid biosynthesis</keyword>
<keyword id="KW-0443">Lipid metabolism</keyword>
<keyword id="KW-0547">Nucleotide-binding</keyword>
<keyword id="KW-1185">Reference proteome</keyword>
<keyword id="KW-0808">Transferase</keyword>
<organism>
    <name type="scientific">Caulobacter vibrioides (strain ATCC 19089 / CIP 103742 / CB 15)</name>
    <name type="common">Caulobacter crescentus</name>
    <dbReference type="NCBI Taxonomy" id="190650"/>
    <lineage>
        <taxon>Bacteria</taxon>
        <taxon>Pseudomonadati</taxon>
        <taxon>Pseudomonadota</taxon>
        <taxon>Alphaproteobacteria</taxon>
        <taxon>Caulobacterales</taxon>
        <taxon>Caulobacteraceae</taxon>
        <taxon>Caulobacter</taxon>
    </lineage>
</organism>
<protein>
    <recommendedName>
        <fullName evidence="1">Tetraacyldisaccharide 4'-kinase</fullName>
        <ecNumber evidence="1">2.7.1.130</ecNumber>
    </recommendedName>
    <alternativeName>
        <fullName evidence="1">Lipid A 4'-kinase</fullName>
    </alternativeName>
</protein>
<evidence type="ECO:0000255" key="1">
    <source>
        <dbReference type="HAMAP-Rule" id="MF_00409"/>
    </source>
</evidence>
<proteinExistence type="inferred from homology"/>
<name>LPXK_CAUVC</name>